<name>MIAA_CROS8</name>
<sequence length="316" mass="35181">MNDVSKTGLPKAIFLMGPTASGKTALAIRLRQTLPVELISVDSALVYKGMDIGTAKPDAHELSQAPHRLLDIIDPAQAYSAADFRRDALQAMAEIVAAGRIPLLVGGTMLYFKALLEGLSPLPSADPTIRAEIERQAAEQGWDALHRKLQDIDPVAAQRIHPNDPQRLSRALEVFFISGKTLTELTQTSGEALPYQVHQFAIAPASRELLHQRIEQRFHQMLASGFEAEVRALFARGDLHTDMPSVRCVGYRQMWSYLAGEISYDEMVYRGICATRQLAKRQITWLRGWEGVHWLDSEKPEQAYSDVLQVIGAKQQ</sequence>
<accession>A7MM88</accession>
<reference key="1">
    <citation type="journal article" date="2010" name="PLoS ONE">
        <title>Genome sequence of Cronobacter sakazakii BAA-894 and comparative genomic hybridization analysis with other Cronobacter species.</title>
        <authorList>
            <person name="Kucerova E."/>
            <person name="Clifton S.W."/>
            <person name="Xia X.Q."/>
            <person name="Long F."/>
            <person name="Porwollik S."/>
            <person name="Fulton L."/>
            <person name="Fronick C."/>
            <person name="Minx P."/>
            <person name="Kyung K."/>
            <person name="Warren W."/>
            <person name="Fulton R."/>
            <person name="Feng D."/>
            <person name="Wollam A."/>
            <person name="Shah N."/>
            <person name="Bhonagiri V."/>
            <person name="Nash W.E."/>
            <person name="Hallsworth-Pepin K."/>
            <person name="Wilson R.K."/>
            <person name="McClelland M."/>
            <person name="Forsythe S.J."/>
        </authorList>
    </citation>
    <scope>NUCLEOTIDE SEQUENCE [LARGE SCALE GENOMIC DNA]</scope>
    <source>
        <strain>ATCC BAA-894</strain>
    </source>
</reference>
<gene>
    <name evidence="1" type="primary">miaA</name>
    <name type="ordered locus">ESA_00181</name>
</gene>
<keyword id="KW-0067">ATP-binding</keyword>
<keyword id="KW-0460">Magnesium</keyword>
<keyword id="KW-0547">Nucleotide-binding</keyword>
<keyword id="KW-1185">Reference proteome</keyword>
<keyword id="KW-0808">Transferase</keyword>
<keyword id="KW-0819">tRNA processing</keyword>
<feature type="chain" id="PRO_1000020597" description="tRNA dimethylallyltransferase">
    <location>
        <begin position="1"/>
        <end position="316"/>
    </location>
</feature>
<feature type="region of interest" description="Interaction with substrate tRNA" evidence="1">
    <location>
        <begin position="42"/>
        <end position="45"/>
    </location>
</feature>
<feature type="region of interest" description="Interaction with substrate tRNA" evidence="1">
    <location>
        <begin position="166"/>
        <end position="170"/>
    </location>
</feature>
<feature type="region of interest" description="Interaction with substrate tRNA" evidence="1">
    <location>
        <begin position="247"/>
        <end position="252"/>
    </location>
</feature>
<feature type="region of interest" description="Interaction with substrate tRNA" evidence="1">
    <location>
        <begin position="280"/>
        <end position="287"/>
    </location>
</feature>
<feature type="binding site" evidence="1">
    <location>
        <begin position="17"/>
        <end position="24"/>
    </location>
    <ligand>
        <name>ATP</name>
        <dbReference type="ChEBI" id="CHEBI:30616"/>
    </ligand>
</feature>
<feature type="binding site" evidence="1">
    <location>
        <begin position="19"/>
        <end position="24"/>
    </location>
    <ligand>
        <name>substrate</name>
    </ligand>
</feature>
<feature type="site" description="Interaction with substrate tRNA" evidence="1">
    <location>
        <position position="108"/>
    </location>
</feature>
<feature type="site" description="Interaction with substrate tRNA" evidence="1">
    <location>
        <position position="130"/>
    </location>
</feature>
<dbReference type="EC" id="2.5.1.75" evidence="1"/>
<dbReference type="EMBL" id="CP000783">
    <property type="protein sequence ID" value="ABU75482.1"/>
    <property type="molecule type" value="Genomic_DNA"/>
</dbReference>
<dbReference type="RefSeq" id="WP_012123687.1">
    <property type="nucleotide sequence ID" value="NC_009778.1"/>
</dbReference>
<dbReference type="SMR" id="A7MM88"/>
<dbReference type="KEGG" id="esa:ESA_00181"/>
<dbReference type="PATRIC" id="fig|290339.8.peg.159"/>
<dbReference type="HOGENOM" id="CLU_032616_0_0_6"/>
<dbReference type="Proteomes" id="UP000000260">
    <property type="component" value="Chromosome"/>
</dbReference>
<dbReference type="GO" id="GO:0005524">
    <property type="term" value="F:ATP binding"/>
    <property type="evidence" value="ECO:0007669"/>
    <property type="project" value="UniProtKB-UniRule"/>
</dbReference>
<dbReference type="GO" id="GO:0052381">
    <property type="term" value="F:tRNA dimethylallyltransferase activity"/>
    <property type="evidence" value="ECO:0007669"/>
    <property type="project" value="UniProtKB-UniRule"/>
</dbReference>
<dbReference type="GO" id="GO:0006400">
    <property type="term" value="P:tRNA modification"/>
    <property type="evidence" value="ECO:0007669"/>
    <property type="project" value="TreeGrafter"/>
</dbReference>
<dbReference type="FunFam" id="1.10.20.140:FF:000001">
    <property type="entry name" value="tRNA dimethylallyltransferase"/>
    <property type="match status" value="1"/>
</dbReference>
<dbReference type="FunFam" id="1.10.287.890:FF:000001">
    <property type="entry name" value="tRNA dimethylallyltransferase"/>
    <property type="match status" value="1"/>
</dbReference>
<dbReference type="Gene3D" id="1.10.20.140">
    <property type="match status" value="1"/>
</dbReference>
<dbReference type="Gene3D" id="1.10.287.890">
    <property type="entry name" value="Crystal structure of tRNA isopentenylpyrophosphate transferase (bh2366) domain"/>
    <property type="match status" value="1"/>
</dbReference>
<dbReference type="Gene3D" id="3.40.50.300">
    <property type="entry name" value="P-loop containing nucleotide triphosphate hydrolases"/>
    <property type="match status" value="1"/>
</dbReference>
<dbReference type="HAMAP" id="MF_00185">
    <property type="entry name" value="IPP_trans"/>
    <property type="match status" value="1"/>
</dbReference>
<dbReference type="InterPro" id="IPR039657">
    <property type="entry name" value="Dimethylallyltransferase"/>
</dbReference>
<dbReference type="InterPro" id="IPR018022">
    <property type="entry name" value="IPT"/>
</dbReference>
<dbReference type="InterPro" id="IPR027417">
    <property type="entry name" value="P-loop_NTPase"/>
</dbReference>
<dbReference type="NCBIfam" id="TIGR00174">
    <property type="entry name" value="miaA"/>
    <property type="match status" value="1"/>
</dbReference>
<dbReference type="PANTHER" id="PTHR11088">
    <property type="entry name" value="TRNA DIMETHYLALLYLTRANSFERASE"/>
    <property type="match status" value="1"/>
</dbReference>
<dbReference type="PANTHER" id="PTHR11088:SF60">
    <property type="entry name" value="TRNA DIMETHYLALLYLTRANSFERASE"/>
    <property type="match status" value="1"/>
</dbReference>
<dbReference type="Pfam" id="PF01715">
    <property type="entry name" value="IPPT"/>
    <property type="match status" value="1"/>
</dbReference>
<dbReference type="SUPFAM" id="SSF52540">
    <property type="entry name" value="P-loop containing nucleoside triphosphate hydrolases"/>
    <property type="match status" value="1"/>
</dbReference>
<proteinExistence type="inferred from homology"/>
<protein>
    <recommendedName>
        <fullName evidence="1">tRNA dimethylallyltransferase</fullName>
        <ecNumber evidence="1">2.5.1.75</ecNumber>
    </recommendedName>
    <alternativeName>
        <fullName evidence="1">Dimethylallyl diphosphate:tRNA dimethylallyltransferase</fullName>
        <shortName evidence="1">DMAPP:tRNA dimethylallyltransferase</shortName>
        <shortName evidence="1">DMATase</shortName>
    </alternativeName>
    <alternativeName>
        <fullName evidence="1">Isopentenyl-diphosphate:tRNA isopentenyltransferase</fullName>
        <shortName evidence="1">IPP transferase</shortName>
        <shortName evidence="1">IPPT</shortName>
        <shortName evidence="1">IPTase</shortName>
    </alternativeName>
</protein>
<organism>
    <name type="scientific">Cronobacter sakazakii (strain ATCC BAA-894)</name>
    <name type="common">Enterobacter sakazakii</name>
    <dbReference type="NCBI Taxonomy" id="290339"/>
    <lineage>
        <taxon>Bacteria</taxon>
        <taxon>Pseudomonadati</taxon>
        <taxon>Pseudomonadota</taxon>
        <taxon>Gammaproteobacteria</taxon>
        <taxon>Enterobacterales</taxon>
        <taxon>Enterobacteriaceae</taxon>
        <taxon>Cronobacter</taxon>
    </lineage>
</organism>
<comment type="function">
    <text evidence="1">Catalyzes the transfer of a dimethylallyl group onto the adenine at position 37 in tRNAs that read codons beginning with uridine, leading to the formation of N6-(dimethylallyl)adenosine (i(6)A).</text>
</comment>
<comment type="catalytic activity">
    <reaction evidence="1">
        <text>adenosine(37) in tRNA + dimethylallyl diphosphate = N(6)-dimethylallyladenosine(37) in tRNA + diphosphate</text>
        <dbReference type="Rhea" id="RHEA:26482"/>
        <dbReference type="Rhea" id="RHEA-COMP:10162"/>
        <dbReference type="Rhea" id="RHEA-COMP:10375"/>
        <dbReference type="ChEBI" id="CHEBI:33019"/>
        <dbReference type="ChEBI" id="CHEBI:57623"/>
        <dbReference type="ChEBI" id="CHEBI:74411"/>
        <dbReference type="ChEBI" id="CHEBI:74415"/>
        <dbReference type="EC" id="2.5.1.75"/>
    </reaction>
</comment>
<comment type="cofactor">
    <cofactor evidence="1">
        <name>Mg(2+)</name>
        <dbReference type="ChEBI" id="CHEBI:18420"/>
    </cofactor>
</comment>
<comment type="subunit">
    <text evidence="1">Monomer.</text>
</comment>
<comment type="similarity">
    <text evidence="1">Belongs to the IPP transferase family.</text>
</comment>
<evidence type="ECO:0000255" key="1">
    <source>
        <dbReference type="HAMAP-Rule" id="MF_00185"/>
    </source>
</evidence>